<gene>
    <name type="primary">zraP</name>
    <name type="ordered locus">STY3713</name>
    <name type="ordered locus">t3459</name>
</gene>
<protein>
    <recommendedName>
        <fullName evidence="1">Signaling pathway modulator ZraP</fullName>
    </recommendedName>
    <alternativeName>
        <fullName>Zinc resistance-associated protein</fullName>
    </alternativeName>
</protein>
<name>ZRAP_SALTI</name>
<dbReference type="EMBL" id="AL513382">
    <property type="protein sequence ID" value="CAD09472.1"/>
    <property type="molecule type" value="Genomic_DNA"/>
</dbReference>
<dbReference type="EMBL" id="AE014613">
    <property type="protein sequence ID" value="AAO70975.1"/>
    <property type="molecule type" value="Genomic_DNA"/>
</dbReference>
<dbReference type="RefSeq" id="NP_457902.1">
    <property type="nucleotide sequence ID" value="NC_003198.1"/>
</dbReference>
<dbReference type="SMR" id="Q8Z331"/>
<dbReference type="STRING" id="220341.gene:17587573"/>
<dbReference type="KEGG" id="stt:t3459"/>
<dbReference type="KEGG" id="sty:STY3713"/>
<dbReference type="PATRIC" id="fig|220341.7.peg.3785"/>
<dbReference type="eggNOG" id="COG3678">
    <property type="taxonomic scope" value="Bacteria"/>
</dbReference>
<dbReference type="HOGENOM" id="CLU_124884_0_0_6"/>
<dbReference type="OMA" id="GMGYGDC"/>
<dbReference type="Proteomes" id="UP000000541">
    <property type="component" value="Chromosome"/>
</dbReference>
<dbReference type="Proteomes" id="UP000002670">
    <property type="component" value="Chromosome"/>
</dbReference>
<dbReference type="GO" id="GO:0042597">
    <property type="term" value="C:periplasmic space"/>
    <property type="evidence" value="ECO:0007669"/>
    <property type="project" value="UniProtKB-SubCell"/>
</dbReference>
<dbReference type="Gene3D" id="1.20.120.1490">
    <property type="match status" value="1"/>
</dbReference>
<dbReference type="InterPro" id="IPR025961">
    <property type="entry name" value="Metal_resist"/>
</dbReference>
<dbReference type="NCBIfam" id="NF008584">
    <property type="entry name" value="PRK11546.1"/>
    <property type="match status" value="1"/>
</dbReference>
<dbReference type="Pfam" id="PF13801">
    <property type="entry name" value="Metal_resist"/>
    <property type="match status" value="1"/>
</dbReference>
<evidence type="ECO:0000250" key="1">
    <source>
        <dbReference type="UniProtKB" id="P0AAA9"/>
    </source>
</evidence>
<evidence type="ECO:0000255" key="2"/>
<evidence type="ECO:0000305" key="3"/>
<comment type="function">
    <text evidence="1">Part of the Zra signaling pathway, an envelope stress response (ESR) system composed of the periplasmic accessory protein ZraP, the histidine kinase ZraS and the transcriptional regulator ZraR. The ZraPSR system contributes to antibiotic resistance and is important for membrane integrity in the presence of membrane-targeting biocides. ZraP acts as a modulator which has both a regulatory and a chaperone function. The zinc-bound form of ZraP modulates the response of the ZraPSR system by inhibiting the expression of the zra genes, probably by interacting with ZraS.</text>
</comment>
<comment type="subcellular location">
    <subcellularLocation>
        <location evidence="1">Periplasm</location>
    </subcellularLocation>
</comment>
<comment type="similarity">
    <text evidence="3">Belongs to the ZraP family.</text>
</comment>
<feature type="signal peptide" evidence="2">
    <location>
        <begin position="1"/>
        <end position="26"/>
    </location>
</feature>
<feature type="chain" id="PRO_0000022721" description="Signaling pathway modulator ZraP">
    <location>
        <begin position="27"/>
        <end position="151"/>
    </location>
</feature>
<feature type="sequence conflict" description="In Ref. 2; AAO70975." evidence="3" ref="2">
    <original>V</original>
    <variation>M</variation>
    <location>
        <position position="127"/>
    </location>
</feature>
<organism>
    <name type="scientific">Salmonella typhi</name>
    <dbReference type="NCBI Taxonomy" id="90370"/>
    <lineage>
        <taxon>Bacteria</taxon>
        <taxon>Pseudomonadati</taxon>
        <taxon>Pseudomonadota</taxon>
        <taxon>Gammaproteobacteria</taxon>
        <taxon>Enterobacterales</taxon>
        <taxon>Enterobacteriaceae</taxon>
        <taxon>Salmonella</taxon>
    </lineage>
</organism>
<reference key="1">
    <citation type="journal article" date="2001" name="Nature">
        <title>Complete genome sequence of a multiple drug resistant Salmonella enterica serovar Typhi CT18.</title>
        <authorList>
            <person name="Parkhill J."/>
            <person name="Dougan G."/>
            <person name="James K.D."/>
            <person name="Thomson N.R."/>
            <person name="Pickard D."/>
            <person name="Wain J."/>
            <person name="Churcher C.M."/>
            <person name="Mungall K.L."/>
            <person name="Bentley S.D."/>
            <person name="Holden M.T.G."/>
            <person name="Sebaihia M."/>
            <person name="Baker S."/>
            <person name="Basham D."/>
            <person name="Brooks K."/>
            <person name="Chillingworth T."/>
            <person name="Connerton P."/>
            <person name="Cronin A."/>
            <person name="Davis P."/>
            <person name="Davies R.M."/>
            <person name="Dowd L."/>
            <person name="White N."/>
            <person name="Farrar J."/>
            <person name="Feltwell T."/>
            <person name="Hamlin N."/>
            <person name="Haque A."/>
            <person name="Hien T.T."/>
            <person name="Holroyd S."/>
            <person name="Jagels K."/>
            <person name="Krogh A."/>
            <person name="Larsen T.S."/>
            <person name="Leather S."/>
            <person name="Moule S."/>
            <person name="O'Gaora P."/>
            <person name="Parry C."/>
            <person name="Quail M.A."/>
            <person name="Rutherford K.M."/>
            <person name="Simmonds M."/>
            <person name="Skelton J."/>
            <person name="Stevens K."/>
            <person name="Whitehead S."/>
            <person name="Barrell B.G."/>
        </authorList>
    </citation>
    <scope>NUCLEOTIDE SEQUENCE [LARGE SCALE GENOMIC DNA]</scope>
    <source>
        <strain>CT18</strain>
    </source>
</reference>
<reference key="2">
    <citation type="journal article" date="2003" name="J. Bacteriol.">
        <title>Comparative genomics of Salmonella enterica serovar Typhi strains Ty2 and CT18.</title>
        <authorList>
            <person name="Deng W."/>
            <person name="Liou S.-R."/>
            <person name="Plunkett G. III"/>
            <person name="Mayhew G.F."/>
            <person name="Rose D.J."/>
            <person name="Burland V."/>
            <person name="Kodoyianni V."/>
            <person name="Schwartz D.C."/>
            <person name="Blattner F.R."/>
        </authorList>
    </citation>
    <scope>NUCLEOTIDE SEQUENCE [LARGE SCALE GENOMIC DNA]</scope>
    <source>
        <strain>ATCC 700931 / Ty2</strain>
    </source>
</reference>
<accession>Q8Z331</accession>
<proteinExistence type="inferred from homology"/>
<sequence length="151" mass="16097">MKRNNKSAIALIALSLLALSSGAAFAGHHWGNNDGMWQQGGSPLTTEQQATAQKIYDDYYTQTSALRQQLISKRYEYNALLTASSPDTAKINAVAKEMESLGQKLDEQRVKRDVAMAQAGIPRGAGVGYGGCGGYGGGYHRGGGHMGMGNW</sequence>
<keyword id="KW-0574">Periplasm</keyword>
<keyword id="KW-0732">Signal</keyword>
<keyword id="KW-0346">Stress response</keyword>
<keyword id="KW-0862">Zinc</keyword>